<protein>
    <recommendedName>
        <fullName evidence="1">S-methyl-5'-thioadenosine phosphorylase 1</fullName>
        <ecNumber evidence="1">2.4.2.28</ecNumber>
    </recommendedName>
    <alternativeName>
        <fullName evidence="1">5'-methylthioadenosine phosphorylase 1</fullName>
        <shortName evidence="1">MTA phosphorylase 1</shortName>
        <shortName evidence="1">MTAP 1</shortName>
        <shortName evidence="1">MTAPase 1</shortName>
    </alternativeName>
</protein>
<accession>E3K7C3</accession>
<evidence type="ECO:0000255" key="1">
    <source>
        <dbReference type="HAMAP-Rule" id="MF_03155"/>
    </source>
</evidence>
<dbReference type="EC" id="2.4.2.28" evidence="1"/>
<dbReference type="EMBL" id="DS178275">
    <property type="protein sequence ID" value="EFP80453.1"/>
    <property type="molecule type" value="Genomic_DNA"/>
</dbReference>
<dbReference type="RefSeq" id="XP_003324872.1">
    <property type="nucleotide sequence ID" value="XM_003324824.2"/>
</dbReference>
<dbReference type="SMR" id="E3K7C3"/>
<dbReference type="FunCoup" id="E3K7C3">
    <property type="interactions" value="339"/>
</dbReference>
<dbReference type="STRING" id="418459.E3K7C3"/>
<dbReference type="EnsemblFungi" id="EFP80453">
    <property type="protein sequence ID" value="EFP80453"/>
    <property type="gene ID" value="PGTG_06409"/>
</dbReference>
<dbReference type="GeneID" id="10539462"/>
<dbReference type="KEGG" id="pgr:PGTG_06409"/>
<dbReference type="VEuPathDB" id="FungiDB:PGTG_06409"/>
<dbReference type="eggNOG" id="KOG3985">
    <property type="taxonomic scope" value="Eukaryota"/>
</dbReference>
<dbReference type="HOGENOM" id="CLU_054456_0_1_1"/>
<dbReference type="InParanoid" id="E3K7C3"/>
<dbReference type="OMA" id="ADPFCPE"/>
<dbReference type="OrthoDB" id="431409at2759"/>
<dbReference type="UniPathway" id="UPA00904">
    <property type="reaction ID" value="UER00873"/>
</dbReference>
<dbReference type="Proteomes" id="UP000008783">
    <property type="component" value="Unassembled WGS sequence"/>
</dbReference>
<dbReference type="GO" id="GO:0005829">
    <property type="term" value="C:cytosol"/>
    <property type="evidence" value="ECO:0000318"/>
    <property type="project" value="GO_Central"/>
</dbReference>
<dbReference type="GO" id="GO:0005634">
    <property type="term" value="C:nucleus"/>
    <property type="evidence" value="ECO:0007669"/>
    <property type="project" value="UniProtKB-SubCell"/>
</dbReference>
<dbReference type="GO" id="GO:0017061">
    <property type="term" value="F:S-methyl-5-thioadenosine phosphorylase activity"/>
    <property type="evidence" value="ECO:0000318"/>
    <property type="project" value="GO_Central"/>
</dbReference>
<dbReference type="GO" id="GO:0019509">
    <property type="term" value="P:L-methionine salvage from methylthioadenosine"/>
    <property type="evidence" value="ECO:0000318"/>
    <property type="project" value="GO_Central"/>
</dbReference>
<dbReference type="GO" id="GO:0006166">
    <property type="term" value="P:purine ribonucleoside salvage"/>
    <property type="evidence" value="ECO:0007669"/>
    <property type="project" value="UniProtKB-KW"/>
</dbReference>
<dbReference type="CDD" id="cd09010">
    <property type="entry name" value="MTAP_SsMTAPII_like_MTIP"/>
    <property type="match status" value="1"/>
</dbReference>
<dbReference type="FunFam" id="3.40.50.1580:FF:000008">
    <property type="entry name" value="S-methyl-5'-thioadenosine phosphorylase"/>
    <property type="match status" value="1"/>
</dbReference>
<dbReference type="Gene3D" id="3.40.50.1580">
    <property type="entry name" value="Nucleoside phosphorylase domain"/>
    <property type="match status" value="1"/>
</dbReference>
<dbReference type="HAMAP" id="MF_01963">
    <property type="entry name" value="MTAP"/>
    <property type="match status" value="1"/>
</dbReference>
<dbReference type="InterPro" id="IPR010044">
    <property type="entry name" value="MTAP"/>
</dbReference>
<dbReference type="InterPro" id="IPR000845">
    <property type="entry name" value="Nucleoside_phosphorylase_d"/>
</dbReference>
<dbReference type="InterPro" id="IPR035994">
    <property type="entry name" value="Nucleoside_phosphorylase_sf"/>
</dbReference>
<dbReference type="InterPro" id="IPR018099">
    <property type="entry name" value="Purine_phosphorylase-2_CS"/>
</dbReference>
<dbReference type="NCBIfam" id="TIGR01694">
    <property type="entry name" value="MTAP"/>
    <property type="match status" value="1"/>
</dbReference>
<dbReference type="PANTHER" id="PTHR42679">
    <property type="entry name" value="S-METHYL-5'-THIOADENOSINE PHOSPHORYLASE"/>
    <property type="match status" value="1"/>
</dbReference>
<dbReference type="PANTHER" id="PTHR42679:SF2">
    <property type="entry name" value="S-METHYL-5'-THIOADENOSINE PHOSPHORYLASE"/>
    <property type="match status" value="1"/>
</dbReference>
<dbReference type="Pfam" id="PF01048">
    <property type="entry name" value="PNP_UDP_1"/>
    <property type="match status" value="1"/>
</dbReference>
<dbReference type="SUPFAM" id="SSF53167">
    <property type="entry name" value="Purine and uridine phosphorylases"/>
    <property type="match status" value="1"/>
</dbReference>
<dbReference type="PROSITE" id="PS01240">
    <property type="entry name" value="PNP_MTAP_2"/>
    <property type="match status" value="1"/>
</dbReference>
<proteinExistence type="inferred from homology"/>
<sequence>MTGHAPLVGVIGGSGLYKLEGIEPVESLNIDTPWGRPSSPITLFKLPSGPVVAFLARHGVSHQFTPSEVPSRANIAALKKIGCQVIIAFSAVGSLREEIKPRDIVVPSQIIDRTKSVRPCTFFEGLGVVGHAMFGEPFDTELTGLVTKSIKEAVTGFEMNDRIGVHAEKVAICMEGPAFSTRAESNMYRMFGGDIINMSVLPEAKLAREAELSYALIAQITDYDAWRESEEPVTVAEVMATIAANVSVSNRLTLTILDEVHNAVAKGQLKTCKGTMEYSVMTKKEMISEESKKTLSFILPYFS</sequence>
<comment type="function">
    <text evidence="1">Catalyzes the reversible phosphorylation of S-methyl-5'-thioadenosine (MTA) to adenine and 5-methylthioribose-1-phosphate. Involved in the breakdown of MTA, a major by-product of polyamine biosynthesis. Responsible for the first step in the methionine salvage pathway after MTA has been generated from S-adenosylmethionine. Has broad substrate specificity with 6-aminopurine nucleosides as preferred substrates.</text>
</comment>
<comment type="catalytic activity">
    <reaction evidence="1">
        <text>S-methyl-5'-thioadenosine + phosphate = 5-(methylsulfanyl)-alpha-D-ribose 1-phosphate + adenine</text>
        <dbReference type="Rhea" id="RHEA:11852"/>
        <dbReference type="ChEBI" id="CHEBI:16708"/>
        <dbReference type="ChEBI" id="CHEBI:17509"/>
        <dbReference type="ChEBI" id="CHEBI:43474"/>
        <dbReference type="ChEBI" id="CHEBI:58533"/>
        <dbReference type="EC" id="2.4.2.28"/>
    </reaction>
</comment>
<comment type="pathway">
    <text evidence="1">Amino-acid biosynthesis; L-methionine biosynthesis via salvage pathway; S-methyl-5-thio-alpha-D-ribose 1-phosphate from S-methyl-5'-thioadenosine (phosphorylase route): step 1/1.</text>
</comment>
<comment type="subunit">
    <text evidence="1">Homotrimer.</text>
</comment>
<comment type="subcellular location">
    <subcellularLocation>
        <location evidence="1">Cytoplasm</location>
    </subcellularLocation>
    <subcellularLocation>
        <location evidence="1">Nucleus</location>
    </subcellularLocation>
</comment>
<comment type="similarity">
    <text evidence="1">Belongs to the PNP/MTAP phosphorylase family. MTAP subfamily.</text>
</comment>
<feature type="chain" id="PRO_0000415133" description="S-methyl-5'-thioadenosine phosphorylase 1">
    <location>
        <begin position="1"/>
        <end position="303"/>
    </location>
</feature>
<feature type="binding site" evidence="1">
    <location>
        <position position="14"/>
    </location>
    <ligand>
        <name>phosphate</name>
        <dbReference type="ChEBI" id="CHEBI:43474"/>
    </ligand>
</feature>
<feature type="binding site" evidence="1">
    <location>
        <begin position="57"/>
        <end position="58"/>
    </location>
    <ligand>
        <name>phosphate</name>
        <dbReference type="ChEBI" id="CHEBI:43474"/>
    </ligand>
</feature>
<feature type="binding site" evidence="1">
    <location>
        <begin position="90"/>
        <end position="91"/>
    </location>
    <ligand>
        <name>phosphate</name>
        <dbReference type="ChEBI" id="CHEBI:43474"/>
    </ligand>
</feature>
<feature type="binding site" evidence="1">
    <location>
        <position position="198"/>
    </location>
    <ligand>
        <name>substrate</name>
    </ligand>
</feature>
<feature type="binding site" evidence="1">
    <location>
        <position position="199"/>
    </location>
    <ligand>
        <name>phosphate</name>
        <dbReference type="ChEBI" id="CHEBI:43474"/>
    </ligand>
</feature>
<feature type="binding site" evidence="1">
    <location>
        <begin position="222"/>
        <end position="224"/>
    </location>
    <ligand>
        <name>substrate</name>
    </ligand>
</feature>
<feature type="site" description="Important for substrate specificity" evidence="1">
    <location>
        <position position="180"/>
    </location>
</feature>
<feature type="site" description="Important for substrate specificity" evidence="1">
    <location>
        <position position="235"/>
    </location>
</feature>
<reference key="1">
    <citation type="journal article" date="2011" name="Proc. Natl. Acad. Sci. U.S.A.">
        <title>Obligate biotrophy features unraveled by the genomic analysis of rust fungi.</title>
        <authorList>
            <person name="Duplessis S."/>
            <person name="Cuomo C.A."/>
            <person name="Lin Y.-C."/>
            <person name="Aerts A."/>
            <person name="Tisserant E."/>
            <person name="Veneault-Fourrey C."/>
            <person name="Joly D.L."/>
            <person name="Hacquard S."/>
            <person name="Amselem J."/>
            <person name="Cantarel B.L."/>
            <person name="Chiu R."/>
            <person name="Coutinho P.M."/>
            <person name="Feau N."/>
            <person name="Field M."/>
            <person name="Frey P."/>
            <person name="Gelhaye E."/>
            <person name="Goldberg J."/>
            <person name="Grabherr M.G."/>
            <person name="Kodira C.D."/>
            <person name="Kohler A."/>
            <person name="Kuees U."/>
            <person name="Lindquist E.A."/>
            <person name="Lucas S.M."/>
            <person name="Mago R."/>
            <person name="Mauceli E."/>
            <person name="Morin E."/>
            <person name="Murat C."/>
            <person name="Pangilinan J.L."/>
            <person name="Park R."/>
            <person name="Pearson M."/>
            <person name="Quesneville H."/>
            <person name="Rouhier N."/>
            <person name="Sakthikumar S."/>
            <person name="Salamov A.A."/>
            <person name="Schmutz J."/>
            <person name="Selles B."/>
            <person name="Shapiro H."/>
            <person name="Tanguay P."/>
            <person name="Tuskan G.A."/>
            <person name="Henrissat B."/>
            <person name="Van de Peer Y."/>
            <person name="Rouze P."/>
            <person name="Ellis J.G."/>
            <person name="Dodds P.N."/>
            <person name="Schein J.E."/>
            <person name="Zhong S."/>
            <person name="Hamelin R.C."/>
            <person name="Grigoriev I.V."/>
            <person name="Szabo L.J."/>
            <person name="Martin F."/>
        </authorList>
    </citation>
    <scope>NUCLEOTIDE SEQUENCE [LARGE SCALE GENOMIC DNA]</scope>
    <source>
        <strain>CRL 75-36-700-3 / race SCCL</strain>
    </source>
</reference>
<reference key="2">
    <citation type="journal article" date="2017" name="G3 (Bethesda)">
        <title>Comparative analysis highlights variable genome content of wheat rusts and divergence of the mating loci.</title>
        <authorList>
            <person name="Cuomo C.A."/>
            <person name="Bakkeren G."/>
            <person name="Khalil H.B."/>
            <person name="Panwar V."/>
            <person name="Joly D."/>
            <person name="Linning R."/>
            <person name="Sakthikumar S."/>
            <person name="Song X."/>
            <person name="Adiconis X."/>
            <person name="Fan L."/>
            <person name="Goldberg J.M."/>
            <person name="Levin J.Z."/>
            <person name="Young S."/>
            <person name="Zeng Q."/>
            <person name="Anikster Y."/>
            <person name="Bruce M."/>
            <person name="Wang M."/>
            <person name="Yin C."/>
            <person name="McCallum B."/>
            <person name="Szabo L.J."/>
            <person name="Hulbert S."/>
            <person name="Chen X."/>
            <person name="Fellers J.P."/>
        </authorList>
    </citation>
    <scope>GENOME REANNOTATION</scope>
    <source>
        <strain>CRL 75-36-700-3 / race SCCL</strain>
    </source>
</reference>
<keyword id="KW-0963">Cytoplasm</keyword>
<keyword id="KW-0328">Glycosyltransferase</keyword>
<keyword id="KW-0539">Nucleus</keyword>
<keyword id="KW-0660">Purine salvage</keyword>
<keyword id="KW-1185">Reference proteome</keyword>
<keyword id="KW-0808">Transferase</keyword>
<organism>
    <name type="scientific">Puccinia graminis f. sp. tritici (strain CRL 75-36-700-3 / race SCCL)</name>
    <name type="common">Black stem rust fungus</name>
    <dbReference type="NCBI Taxonomy" id="418459"/>
    <lineage>
        <taxon>Eukaryota</taxon>
        <taxon>Fungi</taxon>
        <taxon>Dikarya</taxon>
        <taxon>Basidiomycota</taxon>
        <taxon>Pucciniomycotina</taxon>
        <taxon>Pucciniomycetes</taxon>
        <taxon>Pucciniales</taxon>
        <taxon>Pucciniaceae</taxon>
        <taxon>Puccinia</taxon>
    </lineage>
</organism>
<name>MTAP1_PUCGT</name>
<gene>
    <name type="ORF">PGTG_06409</name>
</gene>